<name>CONS_ARATH</name>
<comment type="function">
    <text evidence="4 5 8 14">Transcription factor that acts in the long day flowering pathway and may mediate between the circadian clock and the control of flowering. Plays a role in the regulation of flowering time by acting on 'SUPPRESSOR OF OVEREXPRESSION OF CO1', 'TERMINAL FLOWER 1' and 'FLOWERING LOCUS T'. Also regulates P5CS2 and ACS10 (involved in proline and ethylene biosynthesis, respectively). Regulates the expression of NAKR1 by binding to the 5'-TGTG(N2-3)ATG-3' motif (PubMed:27255839).</text>
</comment>
<comment type="subunit">
    <text evidence="7 8 9 10 11 12 13">Interacts with ADO3, SPA1, SPA2, SPA3 and SPA4 (PubMed:16854975, PubMed:22628657). Interacts with MRG1 and MRG2 (via MRG domain) (PubMed:25211338). Interacts (via B-box) with MIP1A (PubMed:27015278). Interacts with AS1 to form a functional complex regulating FT expression (PubMed:21950734). Interacts with NFYC9 (PubMed:25105952). Component of a red light-dependent nuclear complex made of PHL, PHYB and CO. Interacts directly with PHL in the presence of PHYB (PubMed:24127609).</text>
</comment>
<comment type="interaction">
    <interactant intactId="EBI-1639724">
        <id>Q39057</id>
    </interactant>
    <interactant intactId="EBI-15191793">
        <id>O82617</id>
        <label>BBX23</label>
    </interactant>
    <organismsDiffer>false</organismsDiffer>
    <experiments>4</experiments>
</comment>
<comment type="interaction">
    <interactant intactId="EBI-1639724">
        <id>Q39057</id>
    </interactant>
    <interactant intactId="EBI-15192709">
        <id>Q6NLH4</id>
        <label>BBX29</label>
    </interactant>
    <organismsDiffer>false</organismsDiffer>
    <experiments>4</experiments>
</comment>
<comment type="interaction">
    <interactant intactId="EBI-1639724">
        <id>Q39057</id>
    </interactant>
    <interactant intactId="EBI-4425264">
        <id>Q9LJB7</id>
        <label>BBX32</label>
    </interactant>
    <organismsDiffer>false</organismsDiffer>
    <experiments>3</experiments>
</comment>
<comment type="interaction">
    <interactant intactId="EBI-1639724">
        <id>Q39057</id>
    </interactant>
    <interactant intactId="EBI-301649">
        <id>P43254</id>
        <label>COP1</label>
    </interactant>
    <organismsDiffer>false</organismsDiffer>
    <experiments>8</experiments>
</comment>
<comment type="interaction">
    <interactant intactId="EBI-1639724">
        <id>Q39057</id>
    </interactant>
    <interactant intactId="EBI-963606">
        <id>Q9LQT8</id>
        <label>GAI</label>
    </interactant>
    <organismsDiffer>false</organismsDiffer>
    <experiments>4</experiments>
</comment>
<comment type="interaction">
    <interactant intactId="EBI-1639724">
        <id>Q39057</id>
    </interactant>
    <interactant intactId="EBI-2126009">
        <id>Q9SLG0</id>
        <label>NFYB1</label>
    </interactant>
    <organismsDiffer>false</organismsDiffer>
    <experiments>6</experiments>
</comment>
<comment type="interaction">
    <interactant intactId="EBI-1639724">
        <id>Q39057</id>
    </interactant>
    <interactant intactId="EBI-2125944">
        <id>Q9SMP0</id>
        <label>NFYC1</label>
    </interactant>
    <organismsDiffer>false</organismsDiffer>
    <experiments>8</experiments>
</comment>
<comment type="interaction">
    <interactant intactId="EBI-1639724">
        <id>Q39057</id>
    </interactant>
    <interactant intactId="EBI-2466050">
        <id>Q8L4B2</id>
        <label>NFYC9</label>
    </interactant>
    <organismsDiffer>false</organismsDiffer>
    <experiments>3</experiments>
</comment>
<comment type="interaction">
    <interactant intactId="EBI-1639724">
        <id>Q39057</id>
    </interactant>
    <interactant intactId="EBI-963624">
        <id>Q9SLH3</id>
        <label>RGA</label>
    </interactant>
    <organismsDiffer>false</organismsDiffer>
    <experiments>3</experiments>
</comment>
<comment type="interaction">
    <interactant intactId="EBI-1639724">
        <id>Q39057</id>
    </interactant>
    <interactant intactId="EBI-541600">
        <id>Q39162</id>
        <label>TGA4</label>
    </interactant>
    <organismsDiffer>false</organismsDiffer>
    <experiments>3</experiments>
</comment>
<comment type="subcellular location">
    <subcellularLocation>
        <location evidence="10 13">Nucleus</location>
    </subcellularLocation>
</comment>
<comment type="alternative products">
    <event type="alternative splicing"/>
    <isoform>
        <id>Q39057-1</id>
        <name>1</name>
        <sequence type="displayed"/>
    </isoform>
    <isoform>
        <id>Q39057-2</id>
        <name>2</name>
        <sequence type="described" ref="VSP_036312 VSP_036313"/>
    </isoform>
</comment>
<comment type="tissue specificity">
    <text evidence="6">Expressed in leaves, shoots and shoot apical meristem. Detected in the vascular tissue of the hypocotyl, the cotyledons and the leaves. Restricted to the protoxylem and phloem in young inflorescence stems and to the phloem only in older inflorescences. Also detected in the vascular tissue of the root.</text>
</comment>
<comment type="induction">
    <text>Expressed with a circadian rhythm showing a broad peak between 12 hours and dawn. Higher expression under long days.</text>
</comment>
<comment type="domain">
    <text>The CCT domain is essential for the interaction with SPA1.</text>
</comment>
<comment type="miscellaneous">
    <text>The GIGANTEA-CONSTANS-FLOWER LOCUS T (GI-CO-FT) pathway to control photoperiodic flowering under LD is conserved between Arabidopsis and rice, but the regulation of the downstream gene by the upstream regulatory gene is reversed in the two species. In Arabidopsis, GI acts as an activator of CO, which in turn activates the floral activator FT under LD conditions. In rice, GI activates HD1/CO in a similar manner to that in Arabidopsis. However, under LD conditions, HD1 suppresses HD3A/FT expression, causing the suppression of flowering.</text>
</comment>
<comment type="similarity">
    <text evidence="17">Belongs to the CONSTANS family.</text>
</comment>
<dbReference type="EMBL" id="X94937">
    <property type="protein sequence ID" value="CAA64407.1"/>
    <property type="molecule type" value="mRNA"/>
</dbReference>
<dbReference type="EMBL" id="AL391144">
    <property type="protein sequence ID" value="CAC01783.1"/>
    <property type="molecule type" value="Genomic_DNA"/>
</dbReference>
<dbReference type="EMBL" id="CP002688">
    <property type="protein sequence ID" value="AED92213.1"/>
    <property type="molecule type" value="Genomic_DNA"/>
</dbReference>
<dbReference type="EMBL" id="CP002688">
    <property type="protein sequence ID" value="AED92214.1"/>
    <property type="molecule type" value="Genomic_DNA"/>
</dbReference>
<dbReference type="EMBL" id="BT001926">
    <property type="protein sequence ID" value="AAN71925.1"/>
    <property type="molecule type" value="mRNA"/>
</dbReference>
<dbReference type="EMBL" id="AY086574">
    <property type="protein sequence ID" value="AAM63636.1"/>
    <property type="molecule type" value="mRNA"/>
</dbReference>
<dbReference type="PIR" id="A56133">
    <property type="entry name" value="A56133"/>
</dbReference>
<dbReference type="RefSeq" id="NP_001031887.1">
    <molecule id="Q39057-2"/>
    <property type="nucleotide sequence ID" value="NM_001036810.2"/>
</dbReference>
<dbReference type="RefSeq" id="NP_197088.1">
    <molecule id="Q39057-1"/>
    <property type="nucleotide sequence ID" value="NM_121589.2"/>
</dbReference>
<dbReference type="PDB" id="7CVO">
    <property type="method" value="X-ray"/>
    <property type="resolution" value="2.60 A"/>
    <property type="chains" value="A/F=290-357"/>
</dbReference>
<dbReference type="PDB" id="7CVQ">
    <property type="method" value="X-ray"/>
    <property type="resolution" value="3.30 A"/>
    <property type="chains" value="A/F/K/P=290-357"/>
</dbReference>
<dbReference type="PDB" id="7VSQ">
    <property type="method" value="X-ray"/>
    <property type="resolution" value="2.70 A"/>
    <property type="chains" value="A/B/C=10-110"/>
</dbReference>
<dbReference type="PDB" id="7WSJ">
    <property type="method" value="X-ray"/>
    <property type="resolution" value="2.40 A"/>
    <property type="chains" value="A/B/C=2-110"/>
</dbReference>
<dbReference type="PDBsum" id="7CVO"/>
<dbReference type="PDBsum" id="7CVQ"/>
<dbReference type="PDBsum" id="7VSQ"/>
<dbReference type="PDBsum" id="7WSJ"/>
<dbReference type="SMR" id="Q39057"/>
<dbReference type="BioGRID" id="16717">
    <property type="interactions" value="115"/>
</dbReference>
<dbReference type="FunCoup" id="Q39057">
    <property type="interactions" value="12"/>
</dbReference>
<dbReference type="IntAct" id="Q39057">
    <property type="interactions" value="97"/>
</dbReference>
<dbReference type="MINT" id="Q39057"/>
<dbReference type="STRING" id="3702.Q39057"/>
<dbReference type="iPTMnet" id="Q39057"/>
<dbReference type="PaxDb" id="3702-AT5G15840.1"/>
<dbReference type="EnsemblPlants" id="AT5G15840.1">
    <molecule id="Q39057-1"/>
    <property type="protein sequence ID" value="AT5G15840.1"/>
    <property type="gene ID" value="AT5G15840"/>
</dbReference>
<dbReference type="EnsemblPlants" id="AT5G15840.2">
    <molecule id="Q39057-2"/>
    <property type="protein sequence ID" value="AT5G15840.2"/>
    <property type="gene ID" value="AT5G15840"/>
</dbReference>
<dbReference type="GeneID" id="831441"/>
<dbReference type="Gramene" id="AT5G15840.1">
    <molecule id="Q39057-1"/>
    <property type="protein sequence ID" value="AT5G15840.1"/>
    <property type="gene ID" value="AT5G15840"/>
</dbReference>
<dbReference type="Gramene" id="AT5G15840.2">
    <molecule id="Q39057-2"/>
    <property type="protein sequence ID" value="AT5G15840.2"/>
    <property type="gene ID" value="AT5G15840"/>
</dbReference>
<dbReference type="KEGG" id="ath:AT5G15840"/>
<dbReference type="Araport" id="AT5G15840"/>
<dbReference type="TAIR" id="AT5G15840">
    <property type="gene designation" value="CO"/>
</dbReference>
<dbReference type="eggNOG" id="KOG1601">
    <property type="taxonomic scope" value="Eukaryota"/>
</dbReference>
<dbReference type="HOGENOM" id="CLU_028225_3_2_1"/>
<dbReference type="InParanoid" id="Q39057"/>
<dbReference type="OMA" id="HKQHNIT"/>
<dbReference type="OrthoDB" id="153872at2759"/>
<dbReference type="PhylomeDB" id="Q39057"/>
<dbReference type="PRO" id="PR:Q39057"/>
<dbReference type="Proteomes" id="UP000006548">
    <property type="component" value="Chromosome 5"/>
</dbReference>
<dbReference type="ExpressionAtlas" id="Q39057">
    <property type="expression patterns" value="baseline and differential"/>
</dbReference>
<dbReference type="GO" id="GO:0005634">
    <property type="term" value="C:nucleus"/>
    <property type="evidence" value="ECO:0000314"/>
    <property type="project" value="UniProtKB"/>
</dbReference>
<dbReference type="GO" id="GO:0003677">
    <property type="term" value="F:DNA binding"/>
    <property type="evidence" value="ECO:0000353"/>
    <property type="project" value="TAIR"/>
</dbReference>
<dbReference type="GO" id="GO:0003700">
    <property type="term" value="F:DNA-binding transcription factor activity"/>
    <property type="evidence" value="ECO:0000314"/>
    <property type="project" value="TAIR"/>
</dbReference>
<dbReference type="GO" id="GO:0008270">
    <property type="term" value="F:zinc ion binding"/>
    <property type="evidence" value="ECO:0007669"/>
    <property type="project" value="UniProtKB-KW"/>
</dbReference>
<dbReference type="GO" id="GO:0030154">
    <property type="term" value="P:cell differentiation"/>
    <property type="evidence" value="ECO:0007669"/>
    <property type="project" value="UniProtKB-KW"/>
</dbReference>
<dbReference type="GO" id="GO:0010018">
    <property type="term" value="P:far-red light signaling pathway"/>
    <property type="evidence" value="ECO:0000315"/>
    <property type="project" value="TAIR"/>
</dbReference>
<dbReference type="GO" id="GO:0009908">
    <property type="term" value="P:flower development"/>
    <property type="evidence" value="ECO:0000315"/>
    <property type="project" value="TAIR"/>
</dbReference>
<dbReference type="GO" id="GO:0009909">
    <property type="term" value="P:regulation of flower development"/>
    <property type="evidence" value="ECO:0000315"/>
    <property type="project" value="TAIR"/>
</dbReference>
<dbReference type="GO" id="GO:0010218">
    <property type="term" value="P:response to far red light"/>
    <property type="evidence" value="ECO:0000315"/>
    <property type="project" value="TAIR"/>
</dbReference>
<dbReference type="CDD" id="cd19821">
    <property type="entry name" value="Bbox1_BBX-like"/>
    <property type="match status" value="2"/>
</dbReference>
<dbReference type="InterPro" id="IPR010402">
    <property type="entry name" value="CCT_domain"/>
</dbReference>
<dbReference type="InterPro" id="IPR045281">
    <property type="entry name" value="CONSTANS-like"/>
</dbReference>
<dbReference type="InterPro" id="IPR049808">
    <property type="entry name" value="CONSTANS-like_Bbox1"/>
</dbReference>
<dbReference type="InterPro" id="IPR000315">
    <property type="entry name" value="Znf_B-box"/>
</dbReference>
<dbReference type="PANTHER" id="PTHR31319:SF117">
    <property type="entry name" value="ZINC FINGER PROTEIN CO3"/>
    <property type="match status" value="1"/>
</dbReference>
<dbReference type="PANTHER" id="PTHR31319">
    <property type="entry name" value="ZINC FINGER PROTEIN CONSTANS-LIKE 4"/>
    <property type="match status" value="1"/>
</dbReference>
<dbReference type="Pfam" id="PF06203">
    <property type="entry name" value="CCT"/>
    <property type="match status" value="1"/>
</dbReference>
<dbReference type="Pfam" id="PF00643">
    <property type="entry name" value="zf-B_box"/>
    <property type="match status" value="1"/>
</dbReference>
<dbReference type="SMART" id="SM00336">
    <property type="entry name" value="BBOX"/>
    <property type="match status" value="2"/>
</dbReference>
<dbReference type="PROSITE" id="PS51017">
    <property type="entry name" value="CCT"/>
    <property type="match status" value="1"/>
</dbReference>
<dbReference type="PROSITE" id="PS50119">
    <property type="entry name" value="ZF_BBOX"/>
    <property type="match status" value="2"/>
</dbReference>
<feature type="chain" id="PRO_0000113277" description="Zinc finger protein CONSTANS">
    <location>
        <begin position="1"/>
        <end position="373"/>
    </location>
</feature>
<feature type="domain" description="CCT" evidence="2">
    <location>
        <begin position="306"/>
        <end position="348"/>
    </location>
</feature>
<feature type="zinc finger region" description="B box-type 1; atypical" evidence="1">
    <location>
        <begin position="15"/>
        <end position="57"/>
    </location>
</feature>
<feature type="zinc finger region" description="B box-type 2; atypical" evidence="1">
    <location>
        <begin position="58"/>
        <end position="108"/>
    </location>
</feature>
<feature type="region of interest" description="Disordered" evidence="3">
    <location>
        <begin position="109"/>
        <end position="130"/>
    </location>
</feature>
<feature type="compositionally biased region" description="Polar residues" evidence="3">
    <location>
        <begin position="109"/>
        <end position="120"/>
    </location>
</feature>
<feature type="compositionally biased region" description="Basic and acidic residues" evidence="3">
    <location>
        <begin position="121"/>
        <end position="130"/>
    </location>
</feature>
<feature type="binding site" evidence="1">
    <location>
        <position position="20"/>
    </location>
    <ligand>
        <name>Zn(2+)</name>
        <dbReference type="ChEBI" id="CHEBI:29105"/>
        <label>1</label>
    </ligand>
</feature>
<feature type="binding site" evidence="1">
    <location>
        <position position="23"/>
    </location>
    <ligand>
        <name>Zn(2+)</name>
        <dbReference type="ChEBI" id="CHEBI:29105"/>
        <label>1</label>
    </ligand>
</feature>
<feature type="binding site" evidence="1">
    <location>
        <position position="43"/>
    </location>
    <ligand>
        <name>Zn(2+)</name>
        <dbReference type="ChEBI" id="CHEBI:29105"/>
        <label>1</label>
    </ligand>
</feature>
<feature type="binding site" evidence="1">
    <location>
        <position position="48"/>
    </location>
    <ligand>
        <name>Zn(2+)</name>
        <dbReference type="ChEBI" id="CHEBI:29105"/>
        <label>1</label>
    </ligand>
</feature>
<feature type="binding site" evidence="1">
    <location>
        <position position="63"/>
    </location>
    <ligand>
        <name>Zn(2+)</name>
        <dbReference type="ChEBI" id="CHEBI:29105"/>
        <label>2</label>
    </ligand>
</feature>
<feature type="binding site" evidence="1">
    <location>
        <position position="66"/>
    </location>
    <ligand>
        <name>Zn(2+)</name>
        <dbReference type="ChEBI" id="CHEBI:29105"/>
        <label>2</label>
    </ligand>
</feature>
<feature type="binding site" evidence="1">
    <location>
        <position position="86"/>
    </location>
    <ligand>
        <name>Zn(2+)</name>
        <dbReference type="ChEBI" id="CHEBI:29105"/>
        <label>2</label>
    </ligand>
</feature>
<feature type="binding site" evidence="1">
    <location>
        <position position="91"/>
    </location>
    <ligand>
        <name>Zn(2+)</name>
        <dbReference type="ChEBI" id="CHEBI:29105"/>
        <label>2</label>
    </ligand>
</feature>
<feature type="splice variant" id="VSP_036312" description="In isoform 2." evidence="17">
    <original>AYISSMETGVVPESTACVTT</original>
    <variation>VRLLYICYPFNLASSHNAAG</variation>
    <location>
        <begin position="255"/>
        <end position="274"/>
    </location>
</feature>
<feature type="splice variant" id="VSP_036313" description="In isoform 2." evidence="17">
    <location>
        <begin position="275"/>
        <end position="373"/>
    </location>
</feature>
<feature type="mutagenesis site" description="In co-2; late-flowering under long day condition." evidence="15">
    <original>R</original>
    <variation>H</variation>
    <location>
        <position position="59"/>
    </location>
</feature>
<feature type="mutagenesis site" description="In co-1; late-flowering under long day condition." evidence="15">
    <location>
        <begin position="96"/>
        <end position="98"/>
    </location>
</feature>
<feature type="mutagenesis site" description="In COmVP1-3; no effect on binding to SPA1; when associated with 265-A-A-266 and 370-A-A-371." evidence="7">
    <original>VP</original>
    <variation>AA</variation>
    <location>
        <begin position="214"/>
        <end position="215"/>
    </location>
</feature>
<feature type="mutagenesis site" description="In COmVP1-3; no effect on binding to SPA1; when associated with 214-A-A-215 and 370-A-A-371." evidence="7">
    <original>VP</original>
    <variation>AA</variation>
    <location>
        <begin position="265"/>
        <end position="266"/>
    </location>
</feature>
<feature type="mutagenesis site" description="In COmVP1-3; no effect on binding to SPA1; when associated with 214-A-A-215 and 265-A-A-266." evidence="7">
    <original>VP</original>
    <variation>AA</variation>
    <location>
        <begin position="370"/>
        <end position="371"/>
    </location>
</feature>
<feature type="strand" evidence="21">
    <location>
        <begin position="21"/>
        <end position="23"/>
    </location>
</feature>
<feature type="strand" evidence="22">
    <location>
        <begin position="24"/>
        <end position="27"/>
    </location>
</feature>
<feature type="strand" evidence="22">
    <location>
        <begin position="30"/>
        <end position="32"/>
    </location>
</feature>
<feature type="turn" evidence="22">
    <location>
        <begin position="33"/>
        <end position="36"/>
    </location>
</feature>
<feature type="strand" evidence="22">
    <location>
        <begin position="37"/>
        <end position="39"/>
    </location>
</feature>
<feature type="helix" evidence="22">
    <location>
        <begin position="41"/>
        <end position="48"/>
    </location>
</feature>
<feature type="helix" evidence="22">
    <location>
        <begin position="54"/>
        <end position="56"/>
    </location>
</feature>
<feature type="strand" evidence="22">
    <location>
        <begin position="59"/>
        <end position="62"/>
    </location>
</feature>
<feature type="turn" evidence="22">
    <location>
        <begin position="64"/>
        <end position="66"/>
    </location>
</feature>
<feature type="strand" evidence="22">
    <location>
        <begin position="67"/>
        <end position="70"/>
    </location>
</feature>
<feature type="strand" evidence="22">
    <location>
        <begin position="73"/>
        <end position="75"/>
    </location>
</feature>
<feature type="turn" evidence="22">
    <location>
        <begin position="76"/>
        <end position="79"/>
    </location>
</feature>
<feature type="strand" evidence="22">
    <location>
        <begin position="80"/>
        <end position="82"/>
    </location>
</feature>
<feature type="helix" evidence="22">
    <location>
        <begin position="84"/>
        <end position="91"/>
    </location>
</feature>
<feature type="helix" evidence="22">
    <location>
        <begin position="95"/>
        <end position="98"/>
    </location>
</feature>
<feature type="strand" evidence="22">
    <location>
        <begin position="102"/>
        <end position="104"/>
    </location>
</feature>
<feature type="helix" evidence="20">
    <location>
        <begin position="303"/>
        <end position="316"/>
    </location>
</feature>
<feature type="helix" evidence="20">
    <location>
        <begin position="317"/>
        <end position="319"/>
    </location>
</feature>
<feature type="helix" evidence="20">
    <location>
        <begin position="329"/>
        <end position="335"/>
    </location>
</feature>
<organism>
    <name type="scientific">Arabidopsis thaliana</name>
    <name type="common">Mouse-ear cress</name>
    <dbReference type="NCBI Taxonomy" id="3702"/>
    <lineage>
        <taxon>Eukaryota</taxon>
        <taxon>Viridiplantae</taxon>
        <taxon>Streptophyta</taxon>
        <taxon>Embryophyta</taxon>
        <taxon>Tracheophyta</taxon>
        <taxon>Spermatophyta</taxon>
        <taxon>Magnoliopsida</taxon>
        <taxon>eudicotyledons</taxon>
        <taxon>Gunneridae</taxon>
        <taxon>Pentapetalae</taxon>
        <taxon>rosids</taxon>
        <taxon>malvids</taxon>
        <taxon>Brassicales</taxon>
        <taxon>Brassicaceae</taxon>
        <taxon>Camelineae</taxon>
        <taxon>Arabidopsis</taxon>
    </lineage>
</organism>
<sequence length="373" mass="41986">MLKQESNDIGSGENNRARPCDTCRSNACTVYCHADSAYLCMSCDAQVHSANRVASRHKRVRVCESCERAPAAFLCEADDASLCTACDSEVHSANPLARRHQRVPILPISGNSFSSMTTTHHQSEKTMTDPEKRLVVDQEEGEEGDKDAKEVASWLFPNSDKNNNNQNNGLLFSDEYLNLVDYNSSMDYKFTGEYSQHQQNCSVPQTSYGGDRVVPLKLEESRGHQCHNQQNFQFNIKYGSSGTHYNDNGSINHNAYISSMETGVVPESTACVTTASHPRTPKGTVEQQPDPASQMITVTQLSPMDREARVLRYREKRKTRKFEKTIRYASRKAYAEIRPRVNGRFAKREIEAEEQGFNTMLMYNTGYGIVPSF</sequence>
<keyword id="KW-0002">3D-structure</keyword>
<keyword id="KW-0025">Alternative splicing</keyword>
<keyword id="KW-0217">Developmental protein</keyword>
<keyword id="KW-0221">Differentiation</keyword>
<keyword id="KW-0238">DNA-binding</keyword>
<keyword id="KW-0287">Flowering</keyword>
<keyword id="KW-0479">Metal-binding</keyword>
<keyword id="KW-0539">Nucleus</keyword>
<keyword id="KW-1185">Reference proteome</keyword>
<keyword id="KW-0677">Repeat</keyword>
<keyword id="KW-0804">Transcription</keyword>
<keyword id="KW-0805">Transcription regulation</keyword>
<keyword id="KW-0862">Zinc</keyword>
<keyword id="KW-0863">Zinc-finger</keyword>
<accession>Q39057</accession>
<accession>Q2V373</accession>
<gene>
    <name evidence="16" type="primary">CO</name>
    <name evidence="18" type="ordered locus">At5g15840</name>
    <name evidence="19" type="ORF">F14F8_220</name>
</gene>
<reference key="1">
    <citation type="journal article" date="1995" name="Cell">
        <title>The CONSTANS gene of Arabidopsis promotes flowering and encodes a protein showing similarities to zinc finger transcription factors.</title>
        <authorList>
            <person name="Putterill J.J."/>
            <person name="Robson F."/>
            <person name="Lee K."/>
            <person name="Simon R."/>
            <person name="Coupland G."/>
        </authorList>
    </citation>
    <scope>NUCLEOTIDE SEQUENCE [MRNA] (ISOFORM 1)</scope>
    <scope>MUTAGENESIS OF ARG-59 AND 96-LEU--ARG-98</scope>
    <scope>MUTANTS CO-1 AND CO-2</scope>
    <source>
        <strain>cv. Landsberg erecta</strain>
    </source>
</reference>
<reference key="2">
    <citation type="journal article" date="2000" name="Nature">
        <title>Sequence and analysis of chromosome 5 of the plant Arabidopsis thaliana.</title>
        <authorList>
            <person name="Tabata S."/>
            <person name="Kaneko T."/>
            <person name="Nakamura Y."/>
            <person name="Kotani H."/>
            <person name="Kato T."/>
            <person name="Asamizu E."/>
            <person name="Miyajima N."/>
            <person name="Sasamoto S."/>
            <person name="Kimura T."/>
            <person name="Hosouchi T."/>
            <person name="Kawashima K."/>
            <person name="Kohara M."/>
            <person name="Matsumoto M."/>
            <person name="Matsuno A."/>
            <person name="Muraki A."/>
            <person name="Nakayama S."/>
            <person name="Nakazaki N."/>
            <person name="Naruo K."/>
            <person name="Okumura S."/>
            <person name="Shinpo S."/>
            <person name="Takeuchi C."/>
            <person name="Wada T."/>
            <person name="Watanabe A."/>
            <person name="Yamada M."/>
            <person name="Yasuda M."/>
            <person name="Sato S."/>
            <person name="de la Bastide M."/>
            <person name="Huang E."/>
            <person name="Spiegel L."/>
            <person name="Gnoj L."/>
            <person name="O'Shaughnessy A."/>
            <person name="Preston R."/>
            <person name="Habermann K."/>
            <person name="Murray J."/>
            <person name="Johnson D."/>
            <person name="Rohlfing T."/>
            <person name="Nelson J."/>
            <person name="Stoneking T."/>
            <person name="Pepin K."/>
            <person name="Spieth J."/>
            <person name="Sekhon M."/>
            <person name="Armstrong J."/>
            <person name="Becker M."/>
            <person name="Belter E."/>
            <person name="Cordum H."/>
            <person name="Cordes M."/>
            <person name="Courtney L."/>
            <person name="Courtney W."/>
            <person name="Dante M."/>
            <person name="Du H."/>
            <person name="Edwards J."/>
            <person name="Fryman J."/>
            <person name="Haakensen B."/>
            <person name="Lamar E."/>
            <person name="Latreille P."/>
            <person name="Leonard S."/>
            <person name="Meyer R."/>
            <person name="Mulvaney E."/>
            <person name="Ozersky P."/>
            <person name="Riley A."/>
            <person name="Strowmatt C."/>
            <person name="Wagner-McPherson C."/>
            <person name="Wollam A."/>
            <person name="Yoakum M."/>
            <person name="Bell M."/>
            <person name="Dedhia N."/>
            <person name="Parnell L."/>
            <person name="Shah R."/>
            <person name="Rodriguez M."/>
            <person name="Hoon See L."/>
            <person name="Vil D."/>
            <person name="Baker J."/>
            <person name="Kirchoff K."/>
            <person name="Toth K."/>
            <person name="King L."/>
            <person name="Bahret A."/>
            <person name="Miller B."/>
            <person name="Marra M.A."/>
            <person name="Martienssen R."/>
            <person name="McCombie W.R."/>
            <person name="Wilson R.K."/>
            <person name="Murphy G."/>
            <person name="Bancroft I."/>
            <person name="Volckaert G."/>
            <person name="Wambutt R."/>
            <person name="Duesterhoeft A."/>
            <person name="Stiekema W."/>
            <person name="Pohl T."/>
            <person name="Entian K.-D."/>
            <person name="Terryn N."/>
            <person name="Hartley N."/>
            <person name="Bent E."/>
            <person name="Johnson S."/>
            <person name="Langham S.-A."/>
            <person name="McCullagh B."/>
            <person name="Robben J."/>
            <person name="Grymonprez B."/>
            <person name="Zimmermann W."/>
            <person name="Ramsperger U."/>
            <person name="Wedler H."/>
            <person name="Balke K."/>
            <person name="Wedler E."/>
            <person name="Peters S."/>
            <person name="van Staveren M."/>
            <person name="Dirkse W."/>
            <person name="Mooijman P."/>
            <person name="Klein Lankhorst R."/>
            <person name="Weitzenegger T."/>
            <person name="Bothe G."/>
            <person name="Rose M."/>
            <person name="Hauf J."/>
            <person name="Berneiser S."/>
            <person name="Hempel S."/>
            <person name="Feldpausch M."/>
            <person name="Lamberth S."/>
            <person name="Villarroel R."/>
            <person name="Gielen J."/>
            <person name="Ardiles W."/>
            <person name="Bents O."/>
            <person name="Lemcke K."/>
            <person name="Kolesov G."/>
            <person name="Mayer K.F.X."/>
            <person name="Rudd S."/>
            <person name="Schoof H."/>
            <person name="Schueller C."/>
            <person name="Zaccaria P."/>
            <person name="Mewes H.-W."/>
            <person name="Bevan M."/>
            <person name="Fransz P.F."/>
        </authorList>
    </citation>
    <scope>NUCLEOTIDE SEQUENCE [LARGE SCALE GENOMIC DNA]</scope>
    <source>
        <strain>cv. Columbia</strain>
    </source>
</reference>
<reference key="3">
    <citation type="journal article" date="2017" name="Plant J.">
        <title>Araport11: a complete reannotation of the Arabidopsis thaliana reference genome.</title>
        <authorList>
            <person name="Cheng C.Y."/>
            <person name="Krishnakumar V."/>
            <person name="Chan A.P."/>
            <person name="Thibaud-Nissen F."/>
            <person name="Schobel S."/>
            <person name="Town C.D."/>
        </authorList>
    </citation>
    <scope>GENOME REANNOTATION</scope>
    <source>
        <strain>cv. Columbia</strain>
    </source>
</reference>
<reference key="4">
    <citation type="journal article" date="2003" name="Science">
        <title>Empirical analysis of transcriptional activity in the Arabidopsis genome.</title>
        <authorList>
            <person name="Yamada K."/>
            <person name="Lim J."/>
            <person name="Dale J.M."/>
            <person name="Chen H."/>
            <person name="Shinn P."/>
            <person name="Palm C.J."/>
            <person name="Southwick A.M."/>
            <person name="Wu H.C."/>
            <person name="Kim C.J."/>
            <person name="Nguyen M."/>
            <person name="Pham P.K."/>
            <person name="Cheuk R.F."/>
            <person name="Karlin-Newmann G."/>
            <person name="Liu S.X."/>
            <person name="Lam B."/>
            <person name="Sakano H."/>
            <person name="Wu T."/>
            <person name="Yu G."/>
            <person name="Miranda M."/>
            <person name="Quach H.L."/>
            <person name="Tripp M."/>
            <person name="Chang C.H."/>
            <person name="Lee J.M."/>
            <person name="Toriumi M.J."/>
            <person name="Chan M.M."/>
            <person name="Tang C.C."/>
            <person name="Onodera C.S."/>
            <person name="Deng J.M."/>
            <person name="Akiyama K."/>
            <person name="Ansari Y."/>
            <person name="Arakawa T."/>
            <person name="Banh J."/>
            <person name="Banno F."/>
            <person name="Bowser L."/>
            <person name="Brooks S.Y."/>
            <person name="Carninci P."/>
            <person name="Chao Q."/>
            <person name="Choy N."/>
            <person name="Enju A."/>
            <person name="Goldsmith A.D."/>
            <person name="Gurjal M."/>
            <person name="Hansen N.F."/>
            <person name="Hayashizaki Y."/>
            <person name="Johnson-Hopson C."/>
            <person name="Hsuan V.W."/>
            <person name="Iida K."/>
            <person name="Karnes M."/>
            <person name="Khan S."/>
            <person name="Koesema E."/>
            <person name="Ishida J."/>
            <person name="Jiang P.X."/>
            <person name="Jones T."/>
            <person name="Kawai J."/>
            <person name="Kamiya A."/>
            <person name="Meyers C."/>
            <person name="Nakajima M."/>
            <person name="Narusaka M."/>
            <person name="Seki M."/>
            <person name="Sakurai T."/>
            <person name="Satou M."/>
            <person name="Tamse R."/>
            <person name="Vaysberg M."/>
            <person name="Wallender E.K."/>
            <person name="Wong C."/>
            <person name="Yamamura Y."/>
            <person name="Yuan S."/>
            <person name="Shinozaki K."/>
            <person name="Davis R.W."/>
            <person name="Theologis A."/>
            <person name="Ecker J.R."/>
        </authorList>
    </citation>
    <scope>NUCLEOTIDE SEQUENCE [LARGE SCALE MRNA] (ISOFORM 1)</scope>
    <source>
        <strain>cv. Columbia</strain>
    </source>
</reference>
<reference key="5">
    <citation type="submission" date="2002-03" db="EMBL/GenBank/DDBJ databases">
        <title>Full-length cDNA from Arabidopsis thaliana.</title>
        <authorList>
            <person name="Brover V.V."/>
            <person name="Troukhan M.E."/>
            <person name="Alexandrov N.A."/>
            <person name="Lu Y.-P."/>
            <person name="Flavell R.B."/>
            <person name="Feldmann K.A."/>
        </authorList>
    </citation>
    <scope>NUCLEOTIDE SEQUENCE [LARGE SCALE MRNA] (ISOFORM 1)</scope>
</reference>
<reference key="6">
    <citation type="journal article" date="2000" name="Science">
        <title>Distinct roles of CONSTANS target genes in reproductive development of Arabidopsis.</title>
        <authorList>
            <person name="Samach A."/>
            <person name="Onouchi H."/>
            <person name="Gold S.E."/>
            <person name="Ditta G.S."/>
            <person name="Schwarz-Sommer Z."/>
            <person name="Yanofsky M.F."/>
            <person name="Coupland G."/>
        </authorList>
    </citation>
    <scope>FUNCTION</scope>
</reference>
<reference key="7">
    <citation type="journal article" date="2001" name="Nature">
        <title>CONSTANS mediates between the circadian clock and the control of flowering in Arabidopsis.</title>
        <authorList>
            <person name="Suarez-Lopez P."/>
            <person name="Wheatley K."/>
            <person name="Robson F."/>
            <person name="Onouchi H."/>
            <person name="Valverde F."/>
            <person name="Coupland G."/>
        </authorList>
    </citation>
    <scope>FUNCTION</scope>
</reference>
<reference key="8">
    <citation type="journal article" date="2003" name="Plant Physiol.">
        <title>The evolution of CONSTANS-like gene families in barley, rice, and Arabidopsis.</title>
        <authorList>
            <person name="Griffiths S."/>
            <person name="Dunford R.P."/>
            <person name="Coupland G."/>
            <person name="Laurie D.A."/>
        </authorList>
    </citation>
    <scope>GENE FAMILY</scope>
    <scope>NOMENCLATURE</scope>
</reference>
<reference key="9">
    <citation type="journal article" date="2004" name="Development">
        <title>CONSTANS acts in the phloem to regulate a systemic signal that induces photoperiodic flowering of Arabidopsis.</title>
        <authorList>
            <person name="An H."/>
            <person name="Roussot C."/>
            <person name="Suarez-Lopez P."/>
            <person name="Corbesier L."/>
            <person name="Vincent C."/>
            <person name="Pineiro M."/>
            <person name="Hepworth S."/>
            <person name="Mouradov A."/>
            <person name="Justin S."/>
            <person name="Turnbull C."/>
            <person name="Coupland G."/>
        </authorList>
    </citation>
    <scope>TISSUE SPECIFICITY</scope>
</reference>
<reference key="10">
    <citation type="journal article" date="2006" name="Development">
        <title>Arabidopsis SPA proteins regulate photoperiodic flowering and interact with the floral inducer CONSTANS to regulate its stability.</title>
        <authorList>
            <person name="Laubinger S."/>
            <person name="Marchal V."/>
            <person name="Le Gourrierec J."/>
            <person name="Wenkel S."/>
            <person name="Adrian J."/>
            <person name="Jang S."/>
            <person name="Kulajta C."/>
            <person name="Braun H."/>
            <person name="Coupland G."/>
            <person name="Hoecker U."/>
        </authorList>
    </citation>
    <scope>INTERACTION WITH SPA1; SPA2; SPA3 AND SPA4</scope>
    <scope>MUTAGENESIS OF 214-VAL-PRO-215; 265-VAL-PRO-266 AND 370-VAL-PRO-371</scope>
</reference>
<reference key="11">
    <citation type="journal article" date="2012" name="Plant J.">
        <title>CONSTANS and ASYMMETRIC LEAVES 1 complex is involved in the induction of FLOWERING LOCUS T in photoperiodic flowering in Arabidopsis.</title>
        <authorList>
            <person name="Song Y.H."/>
            <person name="Lee I."/>
            <person name="Lee S.Y."/>
            <person name="Imaizumi T."/>
            <person name="Hong J.C."/>
        </authorList>
    </citation>
    <scope>FUNCTION</scope>
    <scope>INTERACTION WITH AS1</scope>
</reference>
<reference key="12">
    <citation type="journal article" date="2012" name="Science">
        <title>FKF1 conveys timing information for CONSTANS stabilization in photoperiodic flowering.</title>
        <authorList>
            <person name="Song Y.H."/>
            <person name="Smith R.W."/>
            <person name="To B.J."/>
            <person name="Millar A.J."/>
            <person name="Imaizumi T."/>
        </authorList>
    </citation>
    <scope>INTERACTION WITH ADO3</scope>
</reference>
<reference key="13">
    <citation type="journal article" date="2013" name="Proc. Natl. Acad. Sci. U.S.A.">
        <title>PHYTOCHROME-DEPENDENT LATE-FLOWERING accelerates flowering through physical interactions with phytochrome B and CONSTANS.</title>
        <authorList>
            <person name="Endo M."/>
            <person name="Tanigawa Y."/>
            <person name="Murakami T."/>
            <person name="Araki T."/>
            <person name="Nagatani A."/>
        </authorList>
    </citation>
    <scope>INTERACTION WITH PHL</scope>
    <scope>SUBCELLULAR LOCATION</scope>
</reference>
<reference key="14">
    <citation type="journal article" date="2014" name="Nat. Commun.">
        <title>Nuclear factor Y-mediated H3K27me3 demethylation of the SOC1 locus orchestrates flowering responses of Arabidopsis.</title>
        <authorList>
            <person name="Hou X."/>
            <person name="Zhou J."/>
            <person name="Liu C."/>
            <person name="Liu L."/>
            <person name="Shen L."/>
            <person name="Yu H."/>
        </authorList>
    </citation>
    <scope>INTERACTION WITH NFYC9</scope>
</reference>
<reference key="15">
    <citation type="journal article" date="2014" name="PLoS Genet.">
        <title>Regulation of arabidopsis flowering by the histone mark readers MRG1/2 via interaction with CONSTANS to modulate FT expression.</title>
        <authorList>
            <person name="Bu Z."/>
            <person name="Yu Y."/>
            <person name="Li Z."/>
            <person name="Liu Y."/>
            <person name="Jiang W."/>
            <person name="Huang Y."/>
            <person name="Dong A.W."/>
        </authorList>
    </citation>
    <scope>INTERACTION WITH MRG1 AND MRG2</scope>
</reference>
<reference key="16">
    <citation type="journal article" date="2016" name="Nat. Plants">
        <title>NaKR1 regulates long-distance movement of FLOWERING LOCUS T in Arabidopsis.</title>
        <authorList>
            <person name="Zhu Y."/>
            <person name="Liu L."/>
            <person name="Shen L."/>
            <person name="Yu H."/>
        </authorList>
    </citation>
    <scope>FUNCTION</scope>
</reference>
<reference key="17">
    <citation type="journal article" date="2016" name="PLoS Genet.">
        <title>Microprotein-mediated recruitment of CONSTANS into a TOPLESS trimeric complex represses flowering in Arabidopsis.</title>
        <authorList>
            <person name="Graeff M."/>
            <person name="Straub D."/>
            <person name="Eguen T."/>
            <person name="Dolde U."/>
            <person name="Rodrigues V."/>
            <person name="Brandt R."/>
            <person name="Wenkel S."/>
        </authorList>
    </citation>
    <scope>INTERACTION WITH MIP1A</scope>
    <scope>SUBCELLULAR LOCATION</scope>
</reference>
<reference key="18">
    <citation type="journal article" date="2021" name="Plant Cell">
        <title>Structural insights into the multivalent binding of the Arabidopsis FLOWERING LOCUS T promoter by the CO-NF-Y master transcription factor complex.</title>
        <authorList>
            <person name="Lv X."/>
            <person name="Zeng X."/>
            <person name="Hu H."/>
            <person name="Chen L."/>
            <person name="Zhang F."/>
            <person name="Liu R."/>
            <person name="Liu Y."/>
            <person name="Zhou X."/>
            <person name="Wang C."/>
            <person name="Wu Z."/>
            <person name="Kim C."/>
            <person name="He Y."/>
            <person name="Du J."/>
        </authorList>
    </citation>
    <scope>X-RAY CRYSTALLOGRAPHY (2.60 ANGSTROMS) OF 290-357</scope>
</reference>
<evidence type="ECO:0000255" key="1">
    <source>
        <dbReference type="PROSITE-ProRule" id="PRU00024"/>
    </source>
</evidence>
<evidence type="ECO:0000255" key="2">
    <source>
        <dbReference type="PROSITE-ProRule" id="PRU00357"/>
    </source>
</evidence>
<evidence type="ECO:0000256" key="3">
    <source>
        <dbReference type="SAM" id="MobiDB-lite"/>
    </source>
</evidence>
<evidence type="ECO:0000269" key="4">
    <source>
    </source>
</evidence>
<evidence type="ECO:0000269" key="5">
    <source>
    </source>
</evidence>
<evidence type="ECO:0000269" key="6">
    <source>
    </source>
</evidence>
<evidence type="ECO:0000269" key="7">
    <source>
    </source>
</evidence>
<evidence type="ECO:0000269" key="8">
    <source>
    </source>
</evidence>
<evidence type="ECO:0000269" key="9">
    <source>
    </source>
</evidence>
<evidence type="ECO:0000269" key="10">
    <source>
    </source>
</evidence>
<evidence type="ECO:0000269" key="11">
    <source>
    </source>
</evidence>
<evidence type="ECO:0000269" key="12">
    <source>
    </source>
</evidence>
<evidence type="ECO:0000269" key="13">
    <source>
    </source>
</evidence>
<evidence type="ECO:0000269" key="14">
    <source>
    </source>
</evidence>
<evidence type="ECO:0000269" key="15">
    <source>
    </source>
</evidence>
<evidence type="ECO:0000303" key="16">
    <source>
    </source>
</evidence>
<evidence type="ECO:0000305" key="17"/>
<evidence type="ECO:0000312" key="18">
    <source>
        <dbReference type="Araport" id="AT5G15840"/>
    </source>
</evidence>
<evidence type="ECO:0000312" key="19">
    <source>
        <dbReference type="EMBL" id="CAC01783.1"/>
    </source>
</evidence>
<evidence type="ECO:0007829" key="20">
    <source>
        <dbReference type="PDB" id="7CVO"/>
    </source>
</evidence>
<evidence type="ECO:0007829" key="21">
    <source>
        <dbReference type="PDB" id="7VSQ"/>
    </source>
</evidence>
<evidence type="ECO:0007829" key="22">
    <source>
        <dbReference type="PDB" id="7WSJ"/>
    </source>
</evidence>
<protein>
    <recommendedName>
        <fullName evidence="16">Zinc finger protein CONSTANS</fullName>
    </recommendedName>
</protein>
<proteinExistence type="evidence at protein level"/>